<accession>Q67593</accession>
<protein>
    <recommendedName>
        <fullName>Putative movement protein</fullName>
        <shortName>MP</shortName>
    </recommendedName>
</protein>
<reference key="1">
    <citation type="submission" date="1991-12" db="EMBL/GenBank/DDBJ databases">
        <title>The nucleotide sequence and genome structure of Geminivirus Miscanthus streak virus.</title>
        <authorList>
            <person name="Chatani M."/>
            <person name="Matsumoto Y."/>
            <person name="Mizuta H."/>
            <person name="Ikegami M."/>
            <person name="Boulton M.I."/>
            <person name="Davies J.W."/>
        </authorList>
    </citation>
    <scope>NUCLEOTIDE SEQUENCE [GENOMIC DNA]</scope>
</reference>
<comment type="function">
    <text>Involved in the viral transport within, and between cells.</text>
</comment>
<comment type="subunit">
    <text evidence="1">Interacts with the capsid protein (CP). Part of a MP-CP-viral DNA complex (By similarity).</text>
</comment>
<comment type="subcellular location">
    <subcellularLocation>
        <location evidence="3">Host membrane</location>
        <topology evidence="3">Single-pass membrane protein</topology>
    </subcellularLocation>
</comment>
<name>MP_MISV9</name>
<organism>
    <name type="scientific">Miscanthus streak virus (isolate 91)</name>
    <name type="common">MiSV</name>
    <dbReference type="NCBI Taxonomy" id="268776"/>
    <lineage>
        <taxon>Viruses</taxon>
        <taxon>Monodnaviria</taxon>
        <taxon>Shotokuvirae</taxon>
        <taxon>Cressdnaviricota</taxon>
        <taxon>Repensiviricetes</taxon>
        <taxon>Geplafuvirales</taxon>
        <taxon>Geminiviridae</taxon>
        <taxon>Mastrevirus</taxon>
        <taxon>Miscanthus streak virus</taxon>
    </lineage>
</organism>
<organismHost>
    <name type="scientific">Miscanthus sacchariflorus</name>
    <dbReference type="NCBI Taxonomy" id="183675"/>
</organismHost>
<keyword id="KW-1043">Host membrane</keyword>
<keyword id="KW-0472">Membrane</keyword>
<keyword id="KW-1185">Reference proteome</keyword>
<keyword id="KW-0812">Transmembrane</keyword>
<keyword id="KW-1133">Transmembrane helix</keyword>
<keyword id="KW-0813">Transport</keyword>
<keyword id="KW-0916">Viral movement protein</keyword>
<proteinExistence type="inferred from homology"/>
<dbReference type="EMBL" id="D01030">
    <property type="protein sequence ID" value="BAA00837.1"/>
    <property type="molecule type" value="Genomic_DNA"/>
</dbReference>
<dbReference type="PIR" id="JQ1356">
    <property type="entry name" value="JQ1356"/>
</dbReference>
<dbReference type="RefSeq" id="NP_569144.1">
    <property type="nucleotide sequence ID" value="NC_003379.1"/>
</dbReference>
<dbReference type="KEGG" id="vg:932217"/>
<dbReference type="Proteomes" id="UP000008874">
    <property type="component" value="Genome"/>
</dbReference>
<dbReference type="GO" id="GO:0033644">
    <property type="term" value="C:host cell membrane"/>
    <property type="evidence" value="ECO:0007669"/>
    <property type="project" value="UniProtKB-SubCell"/>
</dbReference>
<dbReference type="GO" id="GO:0016020">
    <property type="term" value="C:membrane"/>
    <property type="evidence" value="ECO:0007669"/>
    <property type="project" value="UniProtKB-KW"/>
</dbReference>
<dbReference type="GO" id="GO:0046740">
    <property type="term" value="P:transport of virus in host, cell to cell"/>
    <property type="evidence" value="ECO:0007669"/>
    <property type="project" value="UniProtKB-KW"/>
</dbReference>
<feature type="chain" id="PRO_0000316924" description="Putative movement protein">
    <location>
        <begin position="1"/>
        <end position="84"/>
    </location>
</feature>
<feature type="transmembrane region" description="Helical" evidence="2">
    <location>
        <begin position="15"/>
        <end position="35"/>
    </location>
</feature>
<evidence type="ECO:0000250" key="1"/>
<evidence type="ECO:0000255" key="2"/>
<evidence type="ECO:0000305" key="3"/>
<sequence length="84" mass="8751">MDPYGSRPSHPDDGALHGILVAFIAVLCLIGCLWAAYRLFLKECLTDCSQHTSSGVVAGPRPAATGPTAVVVHNGAEAQRSSAF</sequence>
<gene>
    <name type="ORF">V2</name>
</gene>